<accession>B7GJ95</accession>
<feature type="chain" id="PRO_1000144372" description="Large ribosomal subunit protein bL17">
    <location>
        <begin position="1"/>
        <end position="120"/>
    </location>
</feature>
<proteinExistence type="inferred from homology"/>
<sequence>MSYRKLGRTSSQRKALLRDLVTDLIINERIETTEARAKELRSVVEKMITLGKRGDLHARRQAAAFVRKEVANTETGQDAIQKLFSDIAPRYQDRQGGYTRIMKLGPRRGDGAPMVIIELV</sequence>
<reference key="1">
    <citation type="journal article" date="2008" name="Genome Biol.">
        <title>Encapsulated in silica: genome, proteome and physiology of the thermophilic bacterium Anoxybacillus flavithermus WK1.</title>
        <authorList>
            <person name="Saw J.H."/>
            <person name="Mountain B.W."/>
            <person name="Feng L."/>
            <person name="Omelchenko M.V."/>
            <person name="Hou S."/>
            <person name="Saito J.A."/>
            <person name="Stott M.B."/>
            <person name="Li D."/>
            <person name="Zhao G."/>
            <person name="Wu J."/>
            <person name="Galperin M.Y."/>
            <person name="Koonin E.V."/>
            <person name="Makarova K.S."/>
            <person name="Wolf Y.I."/>
            <person name="Rigden D.J."/>
            <person name="Dunfield P.F."/>
            <person name="Wang L."/>
            <person name="Alam M."/>
        </authorList>
    </citation>
    <scope>NUCLEOTIDE SEQUENCE [LARGE SCALE GENOMIC DNA]</scope>
    <source>
        <strain>DSM 21510 / WK1</strain>
    </source>
</reference>
<gene>
    <name evidence="1" type="primary">rplQ</name>
    <name type="ordered locus">Aflv_0133</name>
</gene>
<evidence type="ECO:0000255" key="1">
    <source>
        <dbReference type="HAMAP-Rule" id="MF_01368"/>
    </source>
</evidence>
<evidence type="ECO:0000305" key="2"/>
<comment type="subunit">
    <text evidence="1">Part of the 50S ribosomal subunit. Contacts protein L32.</text>
</comment>
<comment type="similarity">
    <text evidence="1">Belongs to the bacterial ribosomal protein bL17 family.</text>
</comment>
<dbReference type="EMBL" id="CP000922">
    <property type="protein sequence ID" value="ACJ32517.1"/>
    <property type="molecule type" value="Genomic_DNA"/>
</dbReference>
<dbReference type="RefSeq" id="WP_003397694.1">
    <property type="nucleotide sequence ID" value="NC_011567.1"/>
</dbReference>
<dbReference type="SMR" id="B7GJ95"/>
<dbReference type="STRING" id="491915.Aflv_0133"/>
<dbReference type="GeneID" id="7036332"/>
<dbReference type="KEGG" id="afl:Aflv_0133"/>
<dbReference type="eggNOG" id="COG0203">
    <property type="taxonomic scope" value="Bacteria"/>
</dbReference>
<dbReference type="HOGENOM" id="CLU_074407_2_2_9"/>
<dbReference type="Proteomes" id="UP000000742">
    <property type="component" value="Chromosome"/>
</dbReference>
<dbReference type="GO" id="GO:0022625">
    <property type="term" value="C:cytosolic large ribosomal subunit"/>
    <property type="evidence" value="ECO:0007669"/>
    <property type="project" value="TreeGrafter"/>
</dbReference>
<dbReference type="GO" id="GO:0003735">
    <property type="term" value="F:structural constituent of ribosome"/>
    <property type="evidence" value="ECO:0007669"/>
    <property type="project" value="InterPro"/>
</dbReference>
<dbReference type="GO" id="GO:0006412">
    <property type="term" value="P:translation"/>
    <property type="evidence" value="ECO:0007669"/>
    <property type="project" value="UniProtKB-UniRule"/>
</dbReference>
<dbReference type="FunFam" id="3.90.1030.10:FF:000002">
    <property type="entry name" value="50S ribosomal protein L17"/>
    <property type="match status" value="1"/>
</dbReference>
<dbReference type="Gene3D" id="3.90.1030.10">
    <property type="entry name" value="Ribosomal protein L17"/>
    <property type="match status" value="1"/>
</dbReference>
<dbReference type="HAMAP" id="MF_01368">
    <property type="entry name" value="Ribosomal_bL17"/>
    <property type="match status" value="1"/>
</dbReference>
<dbReference type="InterPro" id="IPR000456">
    <property type="entry name" value="Ribosomal_bL17"/>
</dbReference>
<dbReference type="InterPro" id="IPR047859">
    <property type="entry name" value="Ribosomal_bL17_CS"/>
</dbReference>
<dbReference type="InterPro" id="IPR036373">
    <property type="entry name" value="Ribosomal_bL17_sf"/>
</dbReference>
<dbReference type="NCBIfam" id="TIGR00059">
    <property type="entry name" value="L17"/>
    <property type="match status" value="1"/>
</dbReference>
<dbReference type="PANTHER" id="PTHR14413:SF16">
    <property type="entry name" value="LARGE RIBOSOMAL SUBUNIT PROTEIN BL17M"/>
    <property type="match status" value="1"/>
</dbReference>
<dbReference type="PANTHER" id="PTHR14413">
    <property type="entry name" value="RIBOSOMAL PROTEIN L17"/>
    <property type="match status" value="1"/>
</dbReference>
<dbReference type="Pfam" id="PF01196">
    <property type="entry name" value="Ribosomal_L17"/>
    <property type="match status" value="1"/>
</dbReference>
<dbReference type="SUPFAM" id="SSF64263">
    <property type="entry name" value="Prokaryotic ribosomal protein L17"/>
    <property type="match status" value="1"/>
</dbReference>
<dbReference type="PROSITE" id="PS01167">
    <property type="entry name" value="RIBOSOMAL_L17"/>
    <property type="match status" value="1"/>
</dbReference>
<protein>
    <recommendedName>
        <fullName evidence="1">Large ribosomal subunit protein bL17</fullName>
    </recommendedName>
    <alternativeName>
        <fullName evidence="2">50S ribosomal protein L17</fullName>
    </alternativeName>
</protein>
<name>RL17_ANOFW</name>
<keyword id="KW-0687">Ribonucleoprotein</keyword>
<keyword id="KW-0689">Ribosomal protein</keyword>
<organism>
    <name type="scientific">Anoxybacillus flavithermus (strain DSM 21510 / WK1)</name>
    <dbReference type="NCBI Taxonomy" id="491915"/>
    <lineage>
        <taxon>Bacteria</taxon>
        <taxon>Bacillati</taxon>
        <taxon>Bacillota</taxon>
        <taxon>Bacilli</taxon>
        <taxon>Bacillales</taxon>
        <taxon>Anoxybacillaceae</taxon>
        <taxon>Anoxybacillus</taxon>
    </lineage>
</organism>